<accession>A5FUL0</accession>
<dbReference type="EC" id="2.4.1.227" evidence="1"/>
<dbReference type="EMBL" id="CP000697">
    <property type="protein sequence ID" value="ABQ29292.1"/>
    <property type="molecule type" value="Genomic_DNA"/>
</dbReference>
<dbReference type="RefSeq" id="WP_011941248.1">
    <property type="nucleotide sequence ID" value="NC_009484.1"/>
</dbReference>
<dbReference type="SMR" id="A5FUL0"/>
<dbReference type="STRING" id="349163.Acry_0063"/>
<dbReference type="CAZy" id="GT28">
    <property type="family name" value="Glycosyltransferase Family 28"/>
</dbReference>
<dbReference type="KEGG" id="acr:Acry_0063"/>
<dbReference type="eggNOG" id="COG0707">
    <property type="taxonomic scope" value="Bacteria"/>
</dbReference>
<dbReference type="HOGENOM" id="CLU_037404_2_1_5"/>
<dbReference type="UniPathway" id="UPA00219"/>
<dbReference type="Proteomes" id="UP000000245">
    <property type="component" value="Chromosome"/>
</dbReference>
<dbReference type="GO" id="GO:0005886">
    <property type="term" value="C:plasma membrane"/>
    <property type="evidence" value="ECO:0007669"/>
    <property type="project" value="UniProtKB-SubCell"/>
</dbReference>
<dbReference type="GO" id="GO:0051991">
    <property type="term" value="F:UDP-N-acetyl-D-glucosamine:N-acetylmuramoyl-L-alanyl-D-glutamyl-meso-2,6-diaminopimelyl-D-alanyl-D-alanine-diphosphoundecaprenol 4-beta-N-acetylglucosaminlytransferase activity"/>
    <property type="evidence" value="ECO:0007669"/>
    <property type="project" value="RHEA"/>
</dbReference>
<dbReference type="GO" id="GO:0050511">
    <property type="term" value="F:undecaprenyldiphospho-muramoylpentapeptide beta-N-acetylglucosaminyltransferase activity"/>
    <property type="evidence" value="ECO:0007669"/>
    <property type="project" value="UniProtKB-UniRule"/>
</dbReference>
<dbReference type="GO" id="GO:0005975">
    <property type="term" value="P:carbohydrate metabolic process"/>
    <property type="evidence" value="ECO:0007669"/>
    <property type="project" value="InterPro"/>
</dbReference>
<dbReference type="GO" id="GO:0051301">
    <property type="term" value="P:cell division"/>
    <property type="evidence" value="ECO:0007669"/>
    <property type="project" value="UniProtKB-KW"/>
</dbReference>
<dbReference type="GO" id="GO:0071555">
    <property type="term" value="P:cell wall organization"/>
    <property type="evidence" value="ECO:0007669"/>
    <property type="project" value="UniProtKB-KW"/>
</dbReference>
<dbReference type="GO" id="GO:0030259">
    <property type="term" value="P:lipid glycosylation"/>
    <property type="evidence" value="ECO:0007669"/>
    <property type="project" value="UniProtKB-UniRule"/>
</dbReference>
<dbReference type="GO" id="GO:0009252">
    <property type="term" value="P:peptidoglycan biosynthetic process"/>
    <property type="evidence" value="ECO:0007669"/>
    <property type="project" value="UniProtKB-UniRule"/>
</dbReference>
<dbReference type="GO" id="GO:0008360">
    <property type="term" value="P:regulation of cell shape"/>
    <property type="evidence" value="ECO:0007669"/>
    <property type="project" value="UniProtKB-KW"/>
</dbReference>
<dbReference type="CDD" id="cd03785">
    <property type="entry name" value="GT28_MurG"/>
    <property type="match status" value="1"/>
</dbReference>
<dbReference type="Gene3D" id="3.40.50.2000">
    <property type="entry name" value="Glycogen Phosphorylase B"/>
    <property type="match status" value="2"/>
</dbReference>
<dbReference type="HAMAP" id="MF_00033">
    <property type="entry name" value="MurG"/>
    <property type="match status" value="1"/>
</dbReference>
<dbReference type="InterPro" id="IPR006009">
    <property type="entry name" value="GlcNAc_MurG"/>
</dbReference>
<dbReference type="InterPro" id="IPR007235">
    <property type="entry name" value="Glyco_trans_28_C"/>
</dbReference>
<dbReference type="InterPro" id="IPR004276">
    <property type="entry name" value="GlycoTrans_28_N"/>
</dbReference>
<dbReference type="NCBIfam" id="TIGR01133">
    <property type="entry name" value="murG"/>
    <property type="match status" value="1"/>
</dbReference>
<dbReference type="PANTHER" id="PTHR21015:SF22">
    <property type="entry name" value="GLYCOSYLTRANSFERASE"/>
    <property type="match status" value="1"/>
</dbReference>
<dbReference type="PANTHER" id="PTHR21015">
    <property type="entry name" value="UDP-N-ACETYLGLUCOSAMINE--N-ACETYLMURAMYL-(PENTAPEPTIDE) PYROPHOSPHORYL-UNDECAPRENOL N-ACETYLGLUCOSAMINE TRANSFERASE 1"/>
    <property type="match status" value="1"/>
</dbReference>
<dbReference type="Pfam" id="PF04101">
    <property type="entry name" value="Glyco_tran_28_C"/>
    <property type="match status" value="1"/>
</dbReference>
<dbReference type="Pfam" id="PF03033">
    <property type="entry name" value="Glyco_transf_28"/>
    <property type="match status" value="1"/>
</dbReference>
<dbReference type="SUPFAM" id="SSF53756">
    <property type="entry name" value="UDP-Glycosyltransferase/glycogen phosphorylase"/>
    <property type="match status" value="1"/>
</dbReference>
<name>MURG_ACICJ</name>
<protein>
    <recommendedName>
        <fullName evidence="1">UDP-N-acetylglucosamine--N-acetylmuramyl-(pentapeptide) pyrophosphoryl-undecaprenol N-acetylglucosamine transferase</fullName>
        <ecNumber evidence="1">2.4.1.227</ecNumber>
    </recommendedName>
    <alternativeName>
        <fullName evidence="1">Undecaprenyl-PP-MurNAc-pentapeptide-UDPGlcNAc GlcNAc transferase</fullName>
    </alternativeName>
</protein>
<reference key="1">
    <citation type="submission" date="2007-05" db="EMBL/GenBank/DDBJ databases">
        <title>Complete sequence of chromosome of Acidiphilium cryptum JF-5.</title>
        <authorList>
            <consortium name="US DOE Joint Genome Institute"/>
            <person name="Copeland A."/>
            <person name="Lucas S."/>
            <person name="Lapidus A."/>
            <person name="Barry K."/>
            <person name="Detter J.C."/>
            <person name="Glavina del Rio T."/>
            <person name="Hammon N."/>
            <person name="Israni S."/>
            <person name="Dalin E."/>
            <person name="Tice H."/>
            <person name="Pitluck S."/>
            <person name="Sims D."/>
            <person name="Brettin T."/>
            <person name="Bruce D."/>
            <person name="Han C."/>
            <person name="Schmutz J."/>
            <person name="Larimer F."/>
            <person name="Land M."/>
            <person name="Hauser L."/>
            <person name="Kyrpides N."/>
            <person name="Kim E."/>
            <person name="Magnuson T."/>
            <person name="Richardson P."/>
        </authorList>
    </citation>
    <scope>NUCLEOTIDE SEQUENCE [LARGE SCALE GENOMIC DNA]</scope>
    <source>
        <strain>JF-5</strain>
    </source>
</reference>
<organism>
    <name type="scientific">Acidiphilium cryptum (strain JF-5)</name>
    <dbReference type="NCBI Taxonomy" id="349163"/>
    <lineage>
        <taxon>Bacteria</taxon>
        <taxon>Pseudomonadati</taxon>
        <taxon>Pseudomonadota</taxon>
        <taxon>Alphaproteobacteria</taxon>
        <taxon>Acetobacterales</taxon>
        <taxon>Acidocellaceae</taxon>
        <taxon>Acidiphilium</taxon>
    </lineage>
</organism>
<comment type="function">
    <text evidence="1">Cell wall formation. Catalyzes the transfer of a GlcNAc subunit on undecaprenyl-pyrophosphoryl-MurNAc-pentapeptide (lipid intermediate I) to form undecaprenyl-pyrophosphoryl-MurNAc-(pentapeptide)GlcNAc (lipid intermediate II).</text>
</comment>
<comment type="catalytic activity">
    <reaction evidence="1">
        <text>di-trans,octa-cis-undecaprenyl diphospho-N-acetyl-alpha-D-muramoyl-L-alanyl-D-glutamyl-meso-2,6-diaminopimeloyl-D-alanyl-D-alanine + UDP-N-acetyl-alpha-D-glucosamine = di-trans,octa-cis-undecaprenyl diphospho-[N-acetyl-alpha-D-glucosaminyl-(1-&gt;4)]-N-acetyl-alpha-D-muramoyl-L-alanyl-D-glutamyl-meso-2,6-diaminopimeloyl-D-alanyl-D-alanine + UDP + H(+)</text>
        <dbReference type="Rhea" id="RHEA:31227"/>
        <dbReference type="ChEBI" id="CHEBI:15378"/>
        <dbReference type="ChEBI" id="CHEBI:57705"/>
        <dbReference type="ChEBI" id="CHEBI:58223"/>
        <dbReference type="ChEBI" id="CHEBI:61387"/>
        <dbReference type="ChEBI" id="CHEBI:61388"/>
        <dbReference type="EC" id="2.4.1.227"/>
    </reaction>
</comment>
<comment type="pathway">
    <text evidence="1">Cell wall biogenesis; peptidoglycan biosynthesis.</text>
</comment>
<comment type="subcellular location">
    <subcellularLocation>
        <location evidence="1">Cell inner membrane</location>
        <topology evidence="1">Peripheral membrane protein</topology>
        <orientation evidence="1">Cytoplasmic side</orientation>
    </subcellularLocation>
</comment>
<comment type="similarity">
    <text evidence="1">Belongs to the glycosyltransferase 28 family. MurG subfamily.</text>
</comment>
<evidence type="ECO:0000255" key="1">
    <source>
        <dbReference type="HAMAP-Rule" id="MF_00033"/>
    </source>
</evidence>
<sequence>MRGAMLNPIVIAAGGTGGHMVPAESVADELMRRGQRIVLMTDARSAGQKSAVFAGCERHVLAGAGLAGRSLGRRLLGVAQLARGTVAARHILAKLDAAAVVGFGGYPSVPPVLAAATLRRRPAIVLHDQNAVLGGANRFLARFADHLALSFEGTVGLPGRARATVTGNPVRAAISVLAASPYEPPAETIRLLVLGGSLGARIFATLVPEALARLPEGLRRRIALTMQCPGEAIGAARGALDAAGITHELAPFFSDVAPRMAAAHLLVARSGGSTVAEVATIGRPAIFIPLAINTDQRHNADVLARRGGAFRLDQATTTPDRLAGVLESLLDDPLRLAAMAEAAASARIEEAAARLADLVLSAIAERVR</sequence>
<gene>
    <name evidence="1" type="primary">murG</name>
    <name type="ordered locus">Acry_0063</name>
</gene>
<keyword id="KW-0131">Cell cycle</keyword>
<keyword id="KW-0132">Cell division</keyword>
<keyword id="KW-0997">Cell inner membrane</keyword>
<keyword id="KW-1003">Cell membrane</keyword>
<keyword id="KW-0133">Cell shape</keyword>
<keyword id="KW-0961">Cell wall biogenesis/degradation</keyword>
<keyword id="KW-0328">Glycosyltransferase</keyword>
<keyword id="KW-0472">Membrane</keyword>
<keyword id="KW-0573">Peptidoglycan synthesis</keyword>
<keyword id="KW-1185">Reference proteome</keyword>
<keyword id="KW-0808">Transferase</keyword>
<feature type="chain" id="PRO_0000315057" description="UDP-N-acetylglucosamine--N-acetylmuramyl-(pentapeptide) pyrophosphoryl-undecaprenol N-acetylglucosamine transferase">
    <location>
        <begin position="1"/>
        <end position="368"/>
    </location>
</feature>
<feature type="binding site" evidence="1">
    <location>
        <begin position="16"/>
        <end position="18"/>
    </location>
    <ligand>
        <name>UDP-N-acetyl-alpha-D-glucosamine</name>
        <dbReference type="ChEBI" id="CHEBI:57705"/>
    </ligand>
</feature>
<feature type="binding site" evidence="1">
    <location>
        <position position="130"/>
    </location>
    <ligand>
        <name>UDP-N-acetyl-alpha-D-glucosamine</name>
        <dbReference type="ChEBI" id="CHEBI:57705"/>
    </ligand>
</feature>
<feature type="binding site" evidence="1">
    <location>
        <position position="171"/>
    </location>
    <ligand>
        <name>UDP-N-acetyl-alpha-D-glucosamine</name>
        <dbReference type="ChEBI" id="CHEBI:57705"/>
    </ligand>
</feature>
<feature type="binding site" evidence="1">
    <location>
        <position position="197"/>
    </location>
    <ligand>
        <name>UDP-N-acetyl-alpha-D-glucosamine</name>
        <dbReference type="ChEBI" id="CHEBI:57705"/>
    </ligand>
</feature>
<feature type="binding site" evidence="1">
    <location>
        <position position="296"/>
    </location>
    <ligand>
        <name>UDP-N-acetyl-alpha-D-glucosamine</name>
        <dbReference type="ChEBI" id="CHEBI:57705"/>
    </ligand>
</feature>
<proteinExistence type="inferred from homology"/>